<sequence>MTVRIAINGFGRIGRNVVRALYESGRRAEITVVAINELADAAGMAHLLKYDTSHGRFAWEVRHEREQLFVGDDVIRILHERTLADLPWRELGVDVVLDCTGVYGNREHGEAHIAAGAKKVLFSHPGSNDLDATVVFGVNQNQLRAEHRIVSNASCTTNCIIPVIKLLDDAYGIESGTVTTIHSAMNDQQVIDAYHSDLRRTRAASQSIIPVDTKLAAGITRIFPQFNDRFEAIAVRVPTINVTAIDLSVTVKKPVKASEVNQLLQKAAQGAFHGIVDYTESPLVSIDFNHDPHSAIVDGTQTRVSGAHLIKTLVWCDNEWGFANRMLDTTLAMAAVGFRLDASASTKL</sequence>
<protein>
    <recommendedName>
        <fullName evidence="1">D-erythrose-4-phosphate dehydrogenase</fullName>
        <shortName evidence="1">E4PDH</shortName>
        <ecNumber evidence="1">1.2.1.72</ecNumber>
    </recommendedName>
</protein>
<accession>Q57K44</accession>
<evidence type="ECO:0000255" key="1">
    <source>
        <dbReference type="HAMAP-Rule" id="MF_01640"/>
    </source>
</evidence>
<feature type="chain" id="PRO_0000293156" description="D-erythrose-4-phosphate dehydrogenase">
    <location>
        <begin position="1"/>
        <end position="348"/>
    </location>
</feature>
<feature type="active site" description="Nucleophile" evidence="1">
    <location>
        <position position="155"/>
    </location>
</feature>
<feature type="binding site" evidence="1">
    <location>
        <begin position="12"/>
        <end position="13"/>
    </location>
    <ligand>
        <name>NAD(+)</name>
        <dbReference type="ChEBI" id="CHEBI:57540"/>
    </ligand>
</feature>
<feature type="binding site" evidence="1">
    <location>
        <position position="81"/>
    </location>
    <ligand>
        <name>NAD(+)</name>
        <dbReference type="ChEBI" id="CHEBI:57540"/>
    </ligand>
</feature>
<feature type="binding site" evidence="1">
    <location>
        <begin position="154"/>
        <end position="156"/>
    </location>
    <ligand>
        <name>substrate</name>
    </ligand>
</feature>
<feature type="binding site" evidence="1">
    <location>
        <position position="200"/>
    </location>
    <ligand>
        <name>substrate</name>
    </ligand>
</feature>
<feature type="binding site" evidence="1">
    <location>
        <begin position="213"/>
        <end position="214"/>
    </location>
    <ligand>
        <name>substrate</name>
    </ligand>
</feature>
<feature type="binding site" evidence="1">
    <location>
        <position position="236"/>
    </location>
    <ligand>
        <name>substrate</name>
    </ligand>
</feature>
<feature type="binding site" evidence="1">
    <location>
        <position position="318"/>
    </location>
    <ligand>
        <name>NAD(+)</name>
        <dbReference type="ChEBI" id="CHEBI:57540"/>
    </ligand>
</feature>
<feature type="site" description="Activates thiol group during catalysis" evidence="1">
    <location>
        <position position="182"/>
    </location>
</feature>
<name>E4PD_SALCH</name>
<organism>
    <name type="scientific">Salmonella choleraesuis (strain SC-B67)</name>
    <dbReference type="NCBI Taxonomy" id="321314"/>
    <lineage>
        <taxon>Bacteria</taxon>
        <taxon>Pseudomonadati</taxon>
        <taxon>Pseudomonadota</taxon>
        <taxon>Gammaproteobacteria</taxon>
        <taxon>Enterobacterales</taxon>
        <taxon>Enterobacteriaceae</taxon>
        <taxon>Salmonella</taxon>
    </lineage>
</organism>
<comment type="function">
    <text evidence="1">Catalyzes the NAD-dependent conversion of D-erythrose 4-phosphate to 4-phosphoerythronate.</text>
</comment>
<comment type="catalytic activity">
    <reaction evidence="1">
        <text>D-erythrose 4-phosphate + NAD(+) + H2O = 4-phospho-D-erythronate + NADH + 2 H(+)</text>
        <dbReference type="Rhea" id="RHEA:12056"/>
        <dbReference type="ChEBI" id="CHEBI:15377"/>
        <dbReference type="ChEBI" id="CHEBI:15378"/>
        <dbReference type="ChEBI" id="CHEBI:16897"/>
        <dbReference type="ChEBI" id="CHEBI:57540"/>
        <dbReference type="ChEBI" id="CHEBI:57945"/>
        <dbReference type="ChEBI" id="CHEBI:58766"/>
        <dbReference type="EC" id="1.2.1.72"/>
    </reaction>
</comment>
<comment type="pathway">
    <text evidence="1">Cofactor biosynthesis; pyridoxine 5'-phosphate biosynthesis; pyridoxine 5'-phosphate from D-erythrose 4-phosphate: step 1/5.</text>
</comment>
<comment type="subunit">
    <text evidence="1">Homotetramer.</text>
</comment>
<comment type="subcellular location">
    <subcellularLocation>
        <location evidence="1">Cytoplasm</location>
    </subcellularLocation>
</comment>
<comment type="similarity">
    <text evidence="1">Belongs to the glyceraldehyde-3-phosphate dehydrogenase family. Epd subfamily.</text>
</comment>
<gene>
    <name evidence="1" type="primary">epd</name>
    <name type="ordered locus">SCH_3012</name>
</gene>
<reference key="1">
    <citation type="journal article" date="2005" name="Nucleic Acids Res.">
        <title>The genome sequence of Salmonella enterica serovar Choleraesuis, a highly invasive and resistant zoonotic pathogen.</title>
        <authorList>
            <person name="Chiu C.-H."/>
            <person name="Tang P."/>
            <person name="Chu C."/>
            <person name="Hu S."/>
            <person name="Bao Q."/>
            <person name="Yu J."/>
            <person name="Chou Y.-Y."/>
            <person name="Wang H.-S."/>
            <person name="Lee Y.-S."/>
        </authorList>
    </citation>
    <scope>NUCLEOTIDE SEQUENCE [LARGE SCALE GENOMIC DNA]</scope>
    <source>
        <strain>SC-B67</strain>
    </source>
</reference>
<dbReference type="EC" id="1.2.1.72" evidence="1"/>
<dbReference type="EMBL" id="AE017220">
    <property type="protein sequence ID" value="AAX66918.1"/>
    <property type="molecule type" value="Genomic_DNA"/>
</dbReference>
<dbReference type="RefSeq" id="WP_000218338.1">
    <property type="nucleotide sequence ID" value="NC_006905.1"/>
</dbReference>
<dbReference type="SMR" id="Q57K44"/>
<dbReference type="KEGG" id="sec:SCH_3012"/>
<dbReference type="HOGENOM" id="CLU_030140_0_0_6"/>
<dbReference type="UniPathway" id="UPA00244">
    <property type="reaction ID" value="UER00309"/>
</dbReference>
<dbReference type="Proteomes" id="UP000000538">
    <property type="component" value="Chromosome"/>
</dbReference>
<dbReference type="GO" id="GO:0005737">
    <property type="term" value="C:cytoplasm"/>
    <property type="evidence" value="ECO:0007669"/>
    <property type="project" value="UniProtKB-SubCell"/>
</dbReference>
<dbReference type="GO" id="GO:0048001">
    <property type="term" value="F:erythrose-4-phosphate dehydrogenase activity"/>
    <property type="evidence" value="ECO:0007669"/>
    <property type="project" value="UniProtKB-UniRule"/>
</dbReference>
<dbReference type="GO" id="GO:0051287">
    <property type="term" value="F:NAD binding"/>
    <property type="evidence" value="ECO:0007669"/>
    <property type="project" value="InterPro"/>
</dbReference>
<dbReference type="GO" id="GO:0050661">
    <property type="term" value="F:NADP binding"/>
    <property type="evidence" value="ECO:0007669"/>
    <property type="project" value="InterPro"/>
</dbReference>
<dbReference type="GO" id="GO:0006006">
    <property type="term" value="P:glucose metabolic process"/>
    <property type="evidence" value="ECO:0007669"/>
    <property type="project" value="InterPro"/>
</dbReference>
<dbReference type="GO" id="GO:0042823">
    <property type="term" value="P:pyridoxal phosphate biosynthetic process"/>
    <property type="evidence" value="ECO:0007669"/>
    <property type="project" value="UniProtKB-UniRule"/>
</dbReference>
<dbReference type="GO" id="GO:0008615">
    <property type="term" value="P:pyridoxine biosynthetic process"/>
    <property type="evidence" value="ECO:0007669"/>
    <property type="project" value="UniProtKB-UniRule"/>
</dbReference>
<dbReference type="CDD" id="cd23937">
    <property type="entry name" value="GAPDH_C_E4PDH"/>
    <property type="match status" value="1"/>
</dbReference>
<dbReference type="CDD" id="cd17892">
    <property type="entry name" value="GAPDH_N_E4PDH"/>
    <property type="match status" value="1"/>
</dbReference>
<dbReference type="FunFam" id="3.30.360.10:FF:000007">
    <property type="entry name" value="D-erythrose-4-phosphate dehydrogenase"/>
    <property type="match status" value="1"/>
</dbReference>
<dbReference type="FunFam" id="3.40.50.720:FF:000001">
    <property type="entry name" value="Glyceraldehyde-3-phosphate dehydrogenase"/>
    <property type="match status" value="1"/>
</dbReference>
<dbReference type="Gene3D" id="3.30.360.10">
    <property type="entry name" value="Dihydrodipicolinate Reductase, domain 2"/>
    <property type="match status" value="1"/>
</dbReference>
<dbReference type="Gene3D" id="3.40.50.720">
    <property type="entry name" value="NAD(P)-binding Rossmann-like Domain"/>
    <property type="match status" value="1"/>
</dbReference>
<dbReference type="HAMAP" id="MF_01640">
    <property type="entry name" value="E4P_dehydrog"/>
    <property type="match status" value="1"/>
</dbReference>
<dbReference type="InterPro" id="IPR006422">
    <property type="entry name" value="E4P_DH_bac"/>
</dbReference>
<dbReference type="InterPro" id="IPR020831">
    <property type="entry name" value="GlycerAld/Erythrose_P_DH"/>
</dbReference>
<dbReference type="InterPro" id="IPR020830">
    <property type="entry name" value="GlycerAld_3-P_DH_AS"/>
</dbReference>
<dbReference type="InterPro" id="IPR020829">
    <property type="entry name" value="GlycerAld_3-P_DH_cat"/>
</dbReference>
<dbReference type="InterPro" id="IPR020828">
    <property type="entry name" value="GlycerAld_3-P_DH_NAD(P)-bd"/>
</dbReference>
<dbReference type="InterPro" id="IPR006424">
    <property type="entry name" value="Glyceraldehyde-3-P_DH_1"/>
</dbReference>
<dbReference type="InterPro" id="IPR036291">
    <property type="entry name" value="NAD(P)-bd_dom_sf"/>
</dbReference>
<dbReference type="NCBIfam" id="TIGR01532">
    <property type="entry name" value="E4PD_g-proteo"/>
    <property type="match status" value="1"/>
</dbReference>
<dbReference type="NCBIfam" id="TIGR01534">
    <property type="entry name" value="GAPDH-I"/>
    <property type="match status" value="1"/>
</dbReference>
<dbReference type="NCBIfam" id="NF010058">
    <property type="entry name" value="PRK13535.1"/>
    <property type="match status" value="1"/>
</dbReference>
<dbReference type="PANTHER" id="PTHR43148">
    <property type="entry name" value="GLYCERALDEHYDE-3-PHOSPHATE DEHYDROGENASE 2"/>
    <property type="match status" value="1"/>
</dbReference>
<dbReference type="Pfam" id="PF02800">
    <property type="entry name" value="Gp_dh_C"/>
    <property type="match status" value="1"/>
</dbReference>
<dbReference type="Pfam" id="PF00044">
    <property type="entry name" value="Gp_dh_N"/>
    <property type="match status" value="1"/>
</dbReference>
<dbReference type="PIRSF" id="PIRSF000149">
    <property type="entry name" value="GAP_DH"/>
    <property type="match status" value="1"/>
</dbReference>
<dbReference type="PRINTS" id="PR00078">
    <property type="entry name" value="G3PDHDRGNASE"/>
</dbReference>
<dbReference type="SMART" id="SM00846">
    <property type="entry name" value="Gp_dh_N"/>
    <property type="match status" value="1"/>
</dbReference>
<dbReference type="SUPFAM" id="SSF55347">
    <property type="entry name" value="Glyceraldehyde-3-phosphate dehydrogenase-like, C-terminal domain"/>
    <property type="match status" value="1"/>
</dbReference>
<dbReference type="SUPFAM" id="SSF51735">
    <property type="entry name" value="NAD(P)-binding Rossmann-fold domains"/>
    <property type="match status" value="1"/>
</dbReference>
<dbReference type="PROSITE" id="PS00071">
    <property type="entry name" value="GAPDH"/>
    <property type="match status" value="1"/>
</dbReference>
<keyword id="KW-0963">Cytoplasm</keyword>
<keyword id="KW-0520">NAD</keyword>
<keyword id="KW-0560">Oxidoreductase</keyword>
<keyword id="KW-0664">Pyridoxine biosynthesis</keyword>
<proteinExistence type="inferred from homology"/>